<organism>
    <name type="scientific">Psychrobacter sp. (strain PRwf-1)</name>
    <dbReference type="NCBI Taxonomy" id="349106"/>
    <lineage>
        <taxon>Bacteria</taxon>
        <taxon>Pseudomonadati</taxon>
        <taxon>Pseudomonadota</taxon>
        <taxon>Gammaproteobacteria</taxon>
        <taxon>Moraxellales</taxon>
        <taxon>Moraxellaceae</taxon>
        <taxon>Psychrobacter</taxon>
    </lineage>
</organism>
<sequence>MTHPVTPKNTTRPTPANKPAASTLHPRNPHQGRYDFDKLIKALPELEKHAITNPSGEATINFSDADAVLTLNKALLAHHYNIKYWDLPKGYLCPPIPGRADYIHQVADLLNNNNSGSENKKPHVLDIGTGASLIYPIIGSQSYGWYFTATDIDPVSINTAKAICEINPNLKKLVTVKQQKNPKNIFKGIIGEHDYFDITVCNPPFHGSMQDVLDANNRKQSKLQKNRARRNPNGQANKFADAKNNLNFGGQNAELWTEGGEFSFISRMINESVGYAQQVNWFTTLVSRAENLKPLDALLRKVGARQIKTINMQHGQKASRILAWRFK</sequence>
<dbReference type="EC" id="2.1.1.181" evidence="1"/>
<dbReference type="EMBL" id="CP000713">
    <property type="protein sequence ID" value="ABQ92967.1"/>
    <property type="molecule type" value="Genomic_DNA"/>
</dbReference>
<dbReference type="SMR" id="A5WBC6"/>
<dbReference type="STRING" id="349106.PsycPRwf_0007"/>
<dbReference type="KEGG" id="prw:PsycPRwf_0007"/>
<dbReference type="eggNOG" id="COG3129">
    <property type="taxonomic scope" value="Bacteria"/>
</dbReference>
<dbReference type="HOGENOM" id="CLU_027534_3_0_6"/>
<dbReference type="GO" id="GO:0005737">
    <property type="term" value="C:cytoplasm"/>
    <property type="evidence" value="ECO:0007669"/>
    <property type="project" value="UniProtKB-SubCell"/>
</dbReference>
<dbReference type="GO" id="GO:0052907">
    <property type="term" value="F:23S rRNA (adenine(1618)-N(6))-methyltransferase activity"/>
    <property type="evidence" value="ECO:0007669"/>
    <property type="project" value="UniProtKB-EC"/>
</dbReference>
<dbReference type="GO" id="GO:0070475">
    <property type="term" value="P:rRNA base methylation"/>
    <property type="evidence" value="ECO:0007669"/>
    <property type="project" value="TreeGrafter"/>
</dbReference>
<dbReference type="CDD" id="cd02440">
    <property type="entry name" value="AdoMet_MTases"/>
    <property type="match status" value="1"/>
</dbReference>
<dbReference type="Gene3D" id="3.40.50.150">
    <property type="entry name" value="Vaccinia Virus protein VP39"/>
    <property type="match status" value="1"/>
</dbReference>
<dbReference type="HAMAP" id="MF_01848">
    <property type="entry name" value="23SrRNA_methyltr_F"/>
    <property type="match status" value="1"/>
</dbReference>
<dbReference type="InterPro" id="IPR010286">
    <property type="entry name" value="METTL16/RlmF"/>
</dbReference>
<dbReference type="InterPro" id="IPR016909">
    <property type="entry name" value="rRNA_lsu_MeTfrase_F"/>
</dbReference>
<dbReference type="InterPro" id="IPR029063">
    <property type="entry name" value="SAM-dependent_MTases_sf"/>
</dbReference>
<dbReference type="NCBIfam" id="NF008725">
    <property type="entry name" value="PRK11727.1"/>
    <property type="match status" value="1"/>
</dbReference>
<dbReference type="PANTHER" id="PTHR13393:SF0">
    <property type="entry name" value="RNA N6-ADENOSINE-METHYLTRANSFERASE METTL16"/>
    <property type="match status" value="1"/>
</dbReference>
<dbReference type="PANTHER" id="PTHR13393">
    <property type="entry name" value="SAM-DEPENDENT METHYLTRANSFERASE"/>
    <property type="match status" value="1"/>
</dbReference>
<dbReference type="Pfam" id="PF05971">
    <property type="entry name" value="Methyltransf_10"/>
    <property type="match status" value="1"/>
</dbReference>
<dbReference type="PIRSF" id="PIRSF029038">
    <property type="entry name" value="Mtase_YbiN_prd"/>
    <property type="match status" value="1"/>
</dbReference>
<dbReference type="SUPFAM" id="SSF53335">
    <property type="entry name" value="S-adenosyl-L-methionine-dependent methyltransferases"/>
    <property type="match status" value="1"/>
</dbReference>
<evidence type="ECO:0000255" key="1">
    <source>
        <dbReference type="HAMAP-Rule" id="MF_01848"/>
    </source>
</evidence>
<evidence type="ECO:0000256" key="2">
    <source>
        <dbReference type="SAM" id="MobiDB-lite"/>
    </source>
</evidence>
<keyword id="KW-0963">Cytoplasm</keyword>
<keyword id="KW-0489">Methyltransferase</keyword>
<keyword id="KW-0698">rRNA processing</keyword>
<keyword id="KW-0949">S-adenosyl-L-methionine</keyword>
<keyword id="KW-0808">Transferase</keyword>
<accession>A5WBC6</accession>
<protein>
    <recommendedName>
        <fullName evidence="1">Ribosomal RNA large subunit methyltransferase F</fullName>
        <ecNumber evidence="1">2.1.1.181</ecNumber>
    </recommendedName>
    <alternativeName>
        <fullName evidence="1">23S rRNA mA1618 methyltransferase</fullName>
    </alternativeName>
    <alternativeName>
        <fullName evidence="1">rRNA adenine N-6-methyltransferase</fullName>
    </alternativeName>
</protein>
<reference key="1">
    <citation type="submission" date="2007-05" db="EMBL/GenBank/DDBJ databases">
        <title>Complete sequence of chromosome of Psychrobacter sp. PRwf-1.</title>
        <authorList>
            <consortium name="US DOE Joint Genome Institute"/>
            <person name="Copeland A."/>
            <person name="Lucas S."/>
            <person name="Lapidus A."/>
            <person name="Barry K."/>
            <person name="Detter J.C."/>
            <person name="Glavina del Rio T."/>
            <person name="Hammon N."/>
            <person name="Israni S."/>
            <person name="Dalin E."/>
            <person name="Tice H."/>
            <person name="Pitluck S."/>
            <person name="Chain P."/>
            <person name="Malfatti S."/>
            <person name="Shin M."/>
            <person name="Vergez L."/>
            <person name="Schmutz J."/>
            <person name="Larimer F."/>
            <person name="Land M."/>
            <person name="Hauser L."/>
            <person name="Kyrpides N."/>
            <person name="Kim E."/>
            <person name="Tiedje J."/>
            <person name="Richardson P."/>
        </authorList>
    </citation>
    <scope>NUCLEOTIDE SEQUENCE [LARGE SCALE GENOMIC DNA]</scope>
    <source>
        <strain>PRwf-1</strain>
    </source>
</reference>
<proteinExistence type="inferred from homology"/>
<feature type="chain" id="PRO_0000349942" description="Ribosomal RNA large subunit methyltransferase F">
    <location>
        <begin position="1"/>
        <end position="327"/>
    </location>
</feature>
<feature type="region of interest" description="Disordered" evidence="2">
    <location>
        <begin position="1"/>
        <end position="31"/>
    </location>
</feature>
<comment type="function">
    <text evidence="1">Specifically methylates the adenine in position 1618 of 23S rRNA.</text>
</comment>
<comment type="catalytic activity">
    <reaction evidence="1">
        <text>adenosine(1618) in 23S rRNA + S-adenosyl-L-methionine = N(6)-methyladenosine(1618) in 23S rRNA + S-adenosyl-L-homocysteine + H(+)</text>
        <dbReference type="Rhea" id="RHEA:16497"/>
        <dbReference type="Rhea" id="RHEA-COMP:10229"/>
        <dbReference type="Rhea" id="RHEA-COMP:10231"/>
        <dbReference type="ChEBI" id="CHEBI:15378"/>
        <dbReference type="ChEBI" id="CHEBI:57856"/>
        <dbReference type="ChEBI" id="CHEBI:59789"/>
        <dbReference type="ChEBI" id="CHEBI:74411"/>
        <dbReference type="ChEBI" id="CHEBI:74449"/>
        <dbReference type="EC" id="2.1.1.181"/>
    </reaction>
</comment>
<comment type="subcellular location">
    <subcellularLocation>
        <location evidence="1">Cytoplasm</location>
    </subcellularLocation>
</comment>
<comment type="similarity">
    <text evidence="1">Belongs to the methyltransferase superfamily. METTL16/RlmF family.</text>
</comment>
<name>RLMF_PSYWF</name>
<gene>
    <name evidence="1" type="primary">rlmF</name>
    <name type="ordered locus">PsycPRwf_0007</name>
</gene>